<reference key="1">
    <citation type="journal article" date="2008" name="Antimicrob. Agents Chemother.">
        <title>Mutated response regulator graR is responsible for phenotypic conversion of Staphylococcus aureus from heterogeneous vancomycin-intermediate resistance to vancomycin-intermediate resistance.</title>
        <authorList>
            <person name="Neoh H.-M."/>
            <person name="Cui L."/>
            <person name="Yuzawa H."/>
            <person name="Takeuchi F."/>
            <person name="Matsuo M."/>
            <person name="Hiramatsu K."/>
        </authorList>
    </citation>
    <scope>NUCLEOTIDE SEQUENCE [LARGE SCALE GENOMIC DNA]</scope>
    <source>
        <strain>Mu3 / ATCC 700698</strain>
    </source>
</reference>
<accession>A7WY58</accession>
<organism>
    <name type="scientific">Staphylococcus aureus (strain Mu3 / ATCC 700698)</name>
    <dbReference type="NCBI Taxonomy" id="418127"/>
    <lineage>
        <taxon>Bacteria</taxon>
        <taxon>Bacillati</taxon>
        <taxon>Bacillota</taxon>
        <taxon>Bacilli</taxon>
        <taxon>Bacillales</taxon>
        <taxon>Staphylococcaceae</taxon>
        <taxon>Staphylococcus</taxon>
    </lineage>
</organism>
<proteinExistence type="inferred from homology"/>
<name>RS6_STAA1</name>
<feature type="chain" id="PRO_1000005360" description="Small ribosomal subunit protein bS6">
    <location>
        <begin position="1"/>
        <end position="98"/>
    </location>
</feature>
<protein>
    <recommendedName>
        <fullName evidence="1">Small ribosomal subunit protein bS6</fullName>
    </recommendedName>
    <alternativeName>
        <fullName evidence="2">30S ribosomal protein S6</fullName>
    </alternativeName>
</protein>
<evidence type="ECO:0000255" key="1">
    <source>
        <dbReference type="HAMAP-Rule" id="MF_00360"/>
    </source>
</evidence>
<evidence type="ECO:0000305" key="2"/>
<keyword id="KW-0687">Ribonucleoprotein</keyword>
<keyword id="KW-0689">Ribosomal protein</keyword>
<keyword id="KW-0694">RNA-binding</keyword>
<keyword id="KW-0699">rRNA-binding</keyword>
<gene>
    <name evidence="1" type="primary">rpsF</name>
    <name type="ordered locus">SAHV_0362</name>
</gene>
<sequence length="98" mass="11595">MRTYEVMYIVRPNIEEDAKKALVERFNGILATEGAEVLEAKDWGKRRLAYEINDFKDGFYNIVRVKSDNNKATDEFQRLAKISDDIIRYMVIREDEDK</sequence>
<comment type="function">
    <text evidence="1">Binds together with bS18 to 16S ribosomal RNA.</text>
</comment>
<comment type="similarity">
    <text evidence="1">Belongs to the bacterial ribosomal protein bS6 family.</text>
</comment>
<dbReference type="EMBL" id="AP009324">
    <property type="protein sequence ID" value="BAF77245.1"/>
    <property type="molecule type" value="Genomic_DNA"/>
</dbReference>
<dbReference type="RefSeq" id="WP_001261460.1">
    <property type="nucleotide sequence ID" value="NZ_CTYB01000007.1"/>
</dbReference>
<dbReference type="SMR" id="A7WY58"/>
<dbReference type="GeneID" id="98344691"/>
<dbReference type="KEGG" id="saw:SAHV_0362"/>
<dbReference type="HOGENOM" id="CLU_113441_5_3_9"/>
<dbReference type="GO" id="GO:0005737">
    <property type="term" value="C:cytoplasm"/>
    <property type="evidence" value="ECO:0007669"/>
    <property type="project" value="UniProtKB-ARBA"/>
</dbReference>
<dbReference type="GO" id="GO:1990904">
    <property type="term" value="C:ribonucleoprotein complex"/>
    <property type="evidence" value="ECO:0007669"/>
    <property type="project" value="UniProtKB-KW"/>
</dbReference>
<dbReference type="GO" id="GO:0005840">
    <property type="term" value="C:ribosome"/>
    <property type="evidence" value="ECO:0007669"/>
    <property type="project" value="UniProtKB-KW"/>
</dbReference>
<dbReference type="GO" id="GO:0070181">
    <property type="term" value="F:small ribosomal subunit rRNA binding"/>
    <property type="evidence" value="ECO:0007669"/>
    <property type="project" value="TreeGrafter"/>
</dbReference>
<dbReference type="GO" id="GO:0003735">
    <property type="term" value="F:structural constituent of ribosome"/>
    <property type="evidence" value="ECO:0007669"/>
    <property type="project" value="InterPro"/>
</dbReference>
<dbReference type="GO" id="GO:0006412">
    <property type="term" value="P:translation"/>
    <property type="evidence" value="ECO:0007669"/>
    <property type="project" value="UniProtKB-UniRule"/>
</dbReference>
<dbReference type="CDD" id="cd00473">
    <property type="entry name" value="bS6"/>
    <property type="match status" value="1"/>
</dbReference>
<dbReference type="FunFam" id="3.30.70.60:FF:000002">
    <property type="entry name" value="30S ribosomal protein S6"/>
    <property type="match status" value="1"/>
</dbReference>
<dbReference type="Gene3D" id="3.30.70.60">
    <property type="match status" value="1"/>
</dbReference>
<dbReference type="HAMAP" id="MF_00360">
    <property type="entry name" value="Ribosomal_bS6"/>
    <property type="match status" value="1"/>
</dbReference>
<dbReference type="InterPro" id="IPR000529">
    <property type="entry name" value="Ribosomal_bS6"/>
</dbReference>
<dbReference type="InterPro" id="IPR020815">
    <property type="entry name" value="Ribosomal_bS6_CS"/>
</dbReference>
<dbReference type="InterPro" id="IPR035980">
    <property type="entry name" value="Ribosomal_bS6_sf"/>
</dbReference>
<dbReference type="InterPro" id="IPR020814">
    <property type="entry name" value="Ribosomal_S6_plastid/chlpt"/>
</dbReference>
<dbReference type="InterPro" id="IPR014717">
    <property type="entry name" value="Transl_elong_EF1B/ribsomal_bS6"/>
</dbReference>
<dbReference type="NCBIfam" id="TIGR00166">
    <property type="entry name" value="S6"/>
    <property type="match status" value="1"/>
</dbReference>
<dbReference type="PANTHER" id="PTHR21011">
    <property type="entry name" value="MITOCHONDRIAL 28S RIBOSOMAL PROTEIN S6"/>
    <property type="match status" value="1"/>
</dbReference>
<dbReference type="PANTHER" id="PTHR21011:SF1">
    <property type="entry name" value="SMALL RIBOSOMAL SUBUNIT PROTEIN BS6M"/>
    <property type="match status" value="1"/>
</dbReference>
<dbReference type="Pfam" id="PF01250">
    <property type="entry name" value="Ribosomal_S6"/>
    <property type="match status" value="1"/>
</dbReference>
<dbReference type="SUPFAM" id="SSF54995">
    <property type="entry name" value="Ribosomal protein S6"/>
    <property type="match status" value="1"/>
</dbReference>
<dbReference type="PROSITE" id="PS01048">
    <property type="entry name" value="RIBOSOMAL_S6"/>
    <property type="match status" value="1"/>
</dbReference>